<keyword id="KW-0030">Aminoacyl-tRNA synthetase</keyword>
<keyword id="KW-0067">ATP-binding</keyword>
<keyword id="KW-0175">Coiled coil</keyword>
<keyword id="KW-0963">Cytoplasm</keyword>
<keyword id="KW-0436">Ligase</keyword>
<keyword id="KW-0547">Nucleotide-binding</keyword>
<keyword id="KW-0648">Protein biosynthesis</keyword>
<keyword id="KW-1185">Reference proteome</keyword>
<name>SYV_PROMM</name>
<gene>
    <name evidence="1" type="primary">valS</name>
    <name type="ordered locus">PMT_2191</name>
</gene>
<sequence length="929" mass="103444">MTELSAADPAFVQAADALAKTYDPAGTESRWQCAWEESGVFHPDPQAAGEPFSVVIPPPNVTGSLHMGHAFNTALIDTIVRFQRLQGKNVLCLPGTDHASIAVQTILEKQLKAEAISRYDLGREAFLERAWAWKEESGGRIVDQLRRLGYSVDWQRQRFTLDEGLSAAVREAFVRLHEQGLIYRGEYLVNWCPASGSAVSDLEVEMKEVDGHLWHLRYPLTGGPAADGTTHLEVATTRPETMLGDVAVAVNPADERYRHLVGQTLILPLLGREIPVIADDHVDQDFGTGCVKVTPAHDPNDFAIGRRHDLPQITVMNKNGSMNGHAGRFEGLDRFEARKAVVAALQEEGLLVKVEPHRHSVPYSDRGKVPVEPLLSTQWFVRMEPLAARCHECLDHGAPRFVPNRWQKVYRDWLTEIRDWCISRQLWWGHRIPAWFVVSETDDQLTDATPYLVARSEEEAWQQARDQFGEAVVIQQDEDVLDTWFSSGLWPFSTMGWPDQESADLECWYPTSTLVTGFDIIFFWVARMTMMAGAFTGRMPFADVYIHGLVRDEQNRKMSKSAGNGIDPLLLIERYGTDALRFALVREVAGAGQDIRLDYDRKSDTSATVEAARNFANKLWNATRFALMNLGGETPASLGEPDPASLQLADRWILSRLARMNRDVVERYDSYRLGEAAKCLYEFAWNDICDWYLELSKRRLHPGEDASGEVLADQCTARQVLAKVLADLLVMLHPLMPHLSEELWHGLTGAPKDTFLALQSWPASNKSFLDDALELSFTELIEAIRVVRNLRAVAGLKPAQTVPVQFITGRPELAALLEQATADITALTRAESVVVATSADLTQRCLAGVSGELQVLLPIDGLVDLDALRGRLEKDLAKAEKEIAGLAGRLANPNFAIKAPPNVVEECQSNLAEAEAQAELARQRLSDLG</sequence>
<comment type="function">
    <text evidence="1">Catalyzes the attachment of valine to tRNA(Val). As ValRS can inadvertently accommodate and process structurally similar amino acids such as threonine, to avoid such errors, it has a 'posttransfer' editing activity that hydrolyzes mischarged Thr-tRNA(Val) in a tRNA-dependent manner.</text>
</comment>
<comment type="catalytic activity">
    <reaction evidence="1">
        <text>tRNA(Val) + L-valine + ATP = L-valyl-tRNA(Val) + AMP + diphosphate</text>
        <dbReference type="Rhea" id="RHEA:10704"/>
        <dbReference type="Rhea" id="RHEA-COMP:9672"/>
        <dbReference type="Rhea" id="RHEA-COMP:9708"/>
        <dbReference type="ChEBI" id="CHEBI:30616"/>
        <dbReference type="ChEBI" id="CHEBI:33019"/>
        <dbReference type="ChEBI" id="CHEBI:57762"/>
        <dbReference type="ChEBI" id="CHEBI:78442"/>
        <dbReference type="ChEBI" id="CHEBI:78537"/>
        <dbReference type="ChEBI" id="CHEBI:456215"/>
        <dbReference type="EC" id="6.1.1.9"/>
    </reaction>
</comment>
<comment type="subunit">
    <text evidence="1">Monomer.</text>
</comment>
<comment type="subcellular location">
    <subcellularLocation>
        <location evidence="1">Cytoplasm</location>
    </subcellularLocation>
</comment>
<comment type="domain">
    <text evidence="1">ValRS has two distinct active sites: one for aminoacylation and one for editing. The misactivated threonine is translocated from the active site to the editing site.</text>
</comment>
<comment type="domain">
    <text evidence="1">The C-terminal coiled-coil domain is crucial for aminoacylation activity.</text>
</comment>
<comment type="similarity">
    <text evidence="1">Belongs to the class-I aminoacyl-tRNA synthetase family. ValS type 1 subfamily.</text>
</comment>
<comment type="sequence caution" evidence="2">
    <conflict type="erroneous initiation">
        <sequence resource="EMBL-CDS" id="CAE22365"/>
    </conflict>
</comment>
<accession>Q7TUI9</accession>
<protein>
    <recommendedName>
        <fullName evidence="1">Valine--tRNA ligase</fullName>
        <ecNumber evidence="1">6.1.1.9</ecNumber>
    </recommendedName>
    <alternativeName>
        <fullName evidence="1">Valyl-tRNA synthetase</fullName>
        <shortName evidence="1">ValRS</shortName>
    </alternativeName>
</protein>
<reference key="1">
    <citation type="journal article" date="2003" name="Nature">
        <title>Genome divergence in two Prochlorococcus ecotypes reflects oceanic niche differentiation.</title>
        <authorList>
            <person name="Rocap G."/>
            <person name="Larimer F.W."/>
            <person name="Lamerdin J.E."/>
            <person name="Malfatti S."/>
            <person name="Chain P."/>
            <person name="Ahlgren N.A."/>
            <person name="Arellano A."/>
            <person name="Coleman M."/>
            <person name="Hauser L."/>
            <person name="Hess W.R."/>
            <person name="Johnson Z.I."/>
            <person name="Land M.L."/>
            <person name="Lindell D."/>
            <person name="Post A.F."/>
            <person name="Regala W."/>
            <person name="Shah M."/>
            <person name="Shaw S.L."/>
            <person name="Steglich C."/>
            <person name="Sullivan M.B."/>
            <person name="Ting C.S."/>
            <person name="Tolonen A."/>
            <person name="Webb E.A."/>
            <person name="Zinser E.R."/>
            <person name="Chisholm S.W."/>
        </authorList>
    </citation>
    <scope>NUCLEOTIDE SEQUENCE [LARGE SCALE GENOMIC DNA]</scope>
    <source>
        <strain>MIT 9313</strain>
    </source>
</reference>
<proteinExistence type="inferred from homology"/>
<feature type="chain" id="PRO_0000224531" description="Valine--tRNA ligase">
    <location>
        <begin position="1"/>
        <end position="929"/>
    </location>
</feature>
<feature type="coiled-coil region" evidence="1">
    <location>
        <begin position="862"/>
        <end position="929"/>
    </location>
</feature>
<feature type="short sequence motif" description="'HIGH' region">
    <location>
        <begin position="59"/>
        <end position="69"/>
    </location>
</feature>
<feature type="short sequence motif" description="'KMSKS' region">
    <location>
        <begin position="557"/>
        <end position="561"/>
    </location>
</feature>
<feature type="binding site" evidence="1">
    <location>
        <position position="560"/>
    </location>
    <ligand>
        <name>ATP</name>
        <dbReference type="ChEBI" id="CHEBI:30616"/>
    </ligand>
</feature>
<evidence type="ECO:0000255" key="1">
    <source>
        <dbReference type="HAMAP-Rule" id="MF_02004"/>
    </source>
</evidence>
<evidence type="ECO:0000305" key="2"/>
<dbReference type="EC" id="6.1.1.9" evidence="1"/>
<dbReference type="EMBL" id="BX548175">
    <property type="protein sequence ID" value="CAE22365.1"/>
    <property type="status" value="ALT_INIT"/>
    <property type="molecule type" value="Genomic_DNA"/>
</dbReference>
<dbReference type="SMR" id="Q7TUI9"/>
<dbReference type="KEGG" id="pmt:PMT_2191"/>
<dbReference type="eggNOG" id="COG0525">
    <property type="taxonomic scope" value="Bacteria"/>
</dbReference>
<dbReference type="HOGENOM" id="CLU_001493_0_2_3"/>
<dbReference type="Proteomes" id="UP000001423">
    <property type="component" value="Chromosome"/>
</dbReference>
<dbReference type="GO" id="GO:0005829">
    <property type="term" value="C:cytosol"/>
    <property type="evidence" value="ECO:0007669"/>
    <property type="project" value="TreeGrafter"/>
</dbReference>
<dbReference type="GO" id="GO:0002161">
    <property type="term" value="F:aminoacyl-tRNA deacylase activity"/>
    <property type="evidence" value="ECO:0007669"/>
    <property type="project" value="InterPro"/>
</dbReference>
<dbReference type="GO" id="GO:0005524">
    <property type="term" value="F:ATP binding"/>
    <property type="evidence" value="ECO:0007669"/>
    <property type="project" value="UniProtKB-UniRule"/>
</dbReference>
<dbReference type="GO" id="GO:0004832">
    <property type="term" value="F:valine-tRNA ligase activity"/>
    <property type="evidence" value="ECO:0007669"/>
    <property type="project" value="UniProtKB-UniRule"/>
</dbReference>
<dbReference type="GO" id="GO:0006438">
    <property type="term" value="P:valyl-tRNA aminoacylation"/>
    <property type="evidence" value="ECO:0007669"/>
    <property type="project" value="UniProtKB-UniRule"/>
</dbReference>
<dbReference type="CDD" id="cd07962">
    <property type="entry name" value="Anticodon_Ia_Val"/>
    <property type="match status" value="1"/>
</dbReference>
<dbReference type="CDD" id="cd00817">
    <property type="entry name" value="ValRS_core"/>
    <property type="match status" value="1"/>
</dbReference>
<dbReference type="FunFam" id="1.10.287.380:FF:000001">
    <property type="entry name" value="Valine--tRNA ligase"/>
    <property type="match status" value="1"/>
</dbReference>
<dbReference type="FunFam" id="3.40.50.620:FF:000032">
    <property type="entry name" value="Valine--tRNA ligase"/>
    <property type="match status" value="1"/>
</dbReference>
<dbReference type="FunFam" id="3.40.50.620:FF:000098">
    <property type="entry name" value="Valine--tRNA ligase"/>
    <property type="match status" value="1"/>
</dbReference>
<dbReference type="FunFam" id="3.90.740.10:FF:000005">
    <property type="entry name" value="Valine--tRNA ligase, mitochondrial"/>
    <property type="match status" value="1"/>
</dbReference>
<dbReference type="Gene3D" id="3.40.50.620">
    <property type="entry name" value="HUPs"/>
    <property type="match status" value="2"/>
</dbReference>
<dbReference type="Gene3D" id="1.10.730.10">
    <property type="entry name" value="Isoleucyl-tRNA Synthetase, Domain 1"/>
    <property type="match status" value="1"/>
</dbReference>
<dbReference type="Gene3D" id="1.10.287.380">
    <property type="entry name" value="Valyl-tRNA synthetase, C-terminal domain"/>
    <property type="match status" value="1"/>
</dbReference>
<dbReference type="Gene3D" id="3.90.740.10">
    <property type="entry name" value="Valyl/Leucyl/Isoleucyl-tRNA synthetase, editing domain"/>
    <property type="match status" value="1"/>
</dbReference>
<dbReference type="HAMAP" id="MF_02004">
    <property type="entry name" value="Val_tRNA_synth_type1"/>
    <property type="match status" value="1"/>
</dbReference>
<dbReference type="InterPro" id="IPR001412">
    <property type="entry name" value="aa-tRNA-synth_I_CS"/>
</dbReference>
<dbReference type="InterPro" id="IPR002300">
    <property type="entry name" value="aa-tRNA-synth_Ia"/>
</dbReference>
<dbReference type="InterPro" id="IPR033705">
    <property type="entry name" value="Anticodon_Ia_Val"/>
</dbReference>
<dbReference type="InterPro" id="IPR013155">
    <property type="entry name" value="M/V/L/I-tRNA-synth_anticd-bd"/>
</dbReference>
<dbReference type="InterPro" id="IPR014729">
    <property type="entry name" value="Rossmann-like_a/b/a_fold"/>
</dbReference>
<dbReference type="InterPro" id="IPR010978">
    <property type="entry name" value="tRNA-bd_arm"/>
</dbReference>
<dbReference type="InterPro" id="IPR009080">
    <property type="entry name" value="tRNAsynth_Ia_anticodon-bd"/>
</dbReference>
<dbReference type="InterPro" id="IPR037118">
    <property type="entry name" value="Val-tRNA_synth_C_sf"/>
</dbReference>
<dbReference type="InterPro" id="IPR019499">
    <property type="entry name" value="Val-tRNA_synth_tRNA-bd"/>
</dbReference>
<dbReference type="InterPro" id="IPR009008">
    <property type="entry name" value="Val/Leu/Ile-tRNA-synth_edit"/>
</dbReference>
<dbReference type="InterPro" id="IPR002303">
    <property type="entry name" value="Valyl-tRNA_ligase"/>
</dbReference>
<dbReference type="NCBIfam" id="NF004349">
    <property type="entry name" value="PRK05729.1"/>
    <property type="match status" value="1"/>
</dbReference>
<dbReference type="NCBIfam" id="TIGR00422">
    <property type="entry name" value="valS"/>
    <property type="match status" value="1"/>
</dbReference>
<dbReference type="PANTHER" id="PTHR11946:SF93">
    <property type="entry name" value="VALINE--TRNA LIGASE, CHLOROPLASTIC_MITOCHONDRIAL 2"/>
    <property type="match status" value="1"/>
</dbReference>
<dbReference type="PANTHER" id="PTHR11946">
    <property type="entry name" value="VALYL-TRNA SYNTHETASES"/>
    <property type="match status" value="1"/>
</dbReference>
<dbReference type="Pfam" id="PF08264">
    <property type="entry name" value="Anticodon_1"/>
    <property type="match status" value="1"/>
</dbReference>
<dbReference type="Pfam" id="PF00133">
    <property type="entry name" value="tRNA-synt_1"/>
    <property type="match status" value="1"/>
</dbReference>
<dbReference type="Pfam" id="PF10458">
    <property type="entry name" value="Val_tRNA-synt_C"/>
    <property type="match status" value="1"/>
</dbReference>
<dbReference type="PRINTS" id="PR00986">
    <property type="entry name" value="TRNASYNTHVAL"/>
</dbReference>
<dbReference type="SUPFAM" id="SSF47323">
    <property type="entry name" value="Anticodon-binding domain of a subclass of class I aminoacyl-tRNA synthetases"/>
    <property type="match status" value="1"/>
</dbReference>
<dbReference type="SUPFAM" id="SSF52374">
    <property type="entry name" value="Nucleotidylyl transferase"/>
    <property type="match status" value="1"/>
</dbReference>
<dbReference type="SUPFAM" id="SSF46589">
    <property type="entry name" value="tRNA-binding arm"/>
    <property type="match status" value="1"/>
</dbReference>
<dbReference type="SUPFAM" id="SSF50677">
    <property type="entry name" value="ValRS/IleRS/LeuRS editing domain"/>
    <property type="match status" value="1"/>
</dbReference>
<dbReference type="PROSITE" id="PS00178">
    <property type="entry name" value="AA_TRNA_LIGASE_I"/>
    <property type="match status" value="1"/>
</dbReference>
<organism>
    <name type="scientific">Prochlorococcus marinus (strain MIT 9313)</name>
    <dbReference type="NCBI Taxonomy" id="74547"/>
    <lineage>
        <taxon>Bacteria</taxon>
        <taxon>Bacillati</taxon>
        <taxon>Cyanobacteriota</taxon>
        <taxon>Cyanophyceae</taxon>
        <taxon>Synechococcales</taxon>
        <taxon>Prochlorococcaceae</taxon>
        <taxon>Prochlorococcus</taxon>
    </lineage>
</organism>